<feature type="chain" id="PRO_0000183950" description="Synaptotagmin-4">
    <location>
        <begin position="1"/>
        <end position="425"/>
    </location>
</feature>
<feature type="topological domain" description="Vesicular" evidence="2">
    <location>
        <begin position="1"/>
        <end position="16"/>
    </location>
</feature>
<feature type="transmembrane region" description="Helical" evidence="2">
    <location>
        <begin position="17"/>
        <end position="37"/>
    </location>
</feature>
<feature type="topological domain" description="Cytoplasmic" evidence="2">
    <location>
        <begin position="38"/>
        <end position="425"/>
    </location>
</feature>
<feature type="domain" description="C2 1" evidence="3">
    <location>
        <begin position="153"/>
        <end position="274"/>
    </location>
</feature>
<feature type="domain" description="C2 2" evidence="3">
    <location>
        <begin position="287"/>
        <end position="420"/>
    </location>
</feature>
<feature type="region of interest" description="Disordered" evidence="4">
    <location>
        <begin position="102"/>
        <end position="121"/>
    </location>
</feature>
<feature type="region of interest" description="Disordered" evidence="4">
    <location>
        <begin position="126"/>
        <end position="147"/>
    </location>
</feature>
<feature type="compositionally biased region" description="Polar residues" evidence="4">
    <location>
        <begin position="105"/>
        <end position="119"/>
    </location>
</feature>
<feature type="compositionally biased region" description="Low complexity" evidence="4">
    <location>
        <begin position="137"/>
        <end position="146"/>
    </location>
</feature>
<feature type="binding site" evidence="3">
    <location>
        <position position="246"/>
    </location>
    <ligand>
        <name>Ca(2+)</name>
        <dbReference type="ChEBI" id="CHEBI:29108"/>
    </ligand>
</feature>
<feature type="binding site" evidence="3">
    <location>
        <position position="249"/>
    </location>
    <ligand>
        <name>Ca(2+)</name>
        <dbReference type="ChEBI" id="CHEBI:29108"/>
    </ligand>
</feature>
<feature type="binding site" evidence="3">
    <location>
        <position position="252"/>
    </location>
    <ligand>
        <name>Ca(2+)</name>
        <dbReference type="ChEBI" id="CHEBI:29108"/>
    </ligand>
</feature>
<feature type="modified residue" description="Phosphoserine; by MAPK8" evidence="5 12">
    <location>
        <position position="135"/>
    </location>
</feature>
<feature type="mutagenesis site" description="Increases interaction with KIF1A. Abolishes neuronal dense core vesicles mobility inhibition." evidence="5">
    <original>S</original>
    <variation>A</variation>
    <location>
        <position position="135"/>
    </location>
</feature>
<feature type="mutagenesis site" description="Decreases interaction with KIF1A. Inhibits neuronal dense core vesicles mobility." evidence="5">
    <original>S</original>
    <variation>E</variation>
    <location>
        <position position="135"/>
    </location>
</feature>
<feature type="mutagenesis site" description="Restores Ca(2+)-binding and Ca(2+)-dependent phospholipid binding." evidence="9">
    <original>S</original>
    <variation>D</variation>
    <location>
        <position position="244"/>
    </location>
</feature>
<feature type="strand" evidence="13">
    <location>
        <begin position="290"/>
        <end position="298"/>
    </location>
</feature>
<feature type="turn" evidence="13">
    <location>
        <begin position="299"/>
        <end position="302"/>
    </location>
</feature>
<feature type="strand" evidence="13">
    <location>
        <begin position="303"/>
        <end position="313"/>
    </location>
</feature>
<feature type="strand" evidence="13">
    <location>
        <begin position="325"/>
        <end position="333"/>
    </location>
</feature>
<feature type="strand" evidence="13">
    <location>
        <begin position="336"/>
        <end position="342"/>
    </location>
</feature>
<feature type="strand" evidence="13">
    <location>
        <begin position="350"/>
        <end position="361"/>
    </location>
</feature>
<feature type="strand" evidence="13">
    <location>
        <begin position="364"/>
        <end position="367"/>
    </location>
</feature>
<feature type="strand" evidence="13">
    <location>
        <begin position="370"/>
        <end position="378"/>
    </location>
</feature>
<feature type="strand" evidence="13">
    <location>
        <begin position="386"/>
        <end position="394"/>
    </location>
</feature>
<feature type="helix" evidence="13">
    <location>
        <begin position="400"/>
        <end position="410"/>
    </location>
</feature>
<feature type="strand" evidence="13">
    <location>
        <begin position="416"/>
        <end position="421"/>
    </location>
</feature>
<gene>
    <name type="primary">Syt4</name>
</gene>
<keyword id="KW-0002">3D-structure</keyword>
<keyword id="KW-0106">Calcium</keyword>
<keyword id="KW-0968">Cytoplasmic vesicle</keyword>
<keyword id="KW-0221">Differentiation</keyword>
<keyword id="KW-0472">Membrane</keyword>
<keyword id="KW-0479">Metal-binding</keyword>
<keyword id="KW-0597">Phosphoprotein</keyword>
<keyword id="KW-1185">Reference proteome</keyword>
<keyword id="KW-0677">Repeat</keyword>
<keyword id="KW-0812">Transmembrane</keyword>
<keyword id="KW-1133">Transmembrane helix</keyword>
<name>SYT4_RAT</name>
<sequence>MAPITTSRVEFDEIPTVVGIFSAFGLVFTVSLFAWICCQRRSAKSNKTPPYKFVHVLKGVDIYPENLSSKKKFGGDDKSEAKRKAALPNLSLHLDLEKRDLNGNFPKTNPKAGSSSDLENVTPKLFPETEKEAVSPESLKSSTSLTSEEKQEKLGTLFLSLEYNFEKKAFVVNIKEAQGLPAMDEQSMTSDPYIKMTILPEKKHKVKTRVLRKTLDPVFDETFTFYGVPYPHIQELSLHFTVLSFDRFSRDDVIGEVLVPLSGIELSDGKMLMTREIIKRNAKKSSGRGELLVSLCYQSTTNTLTVVVLKARHLPKSDVSGLSDPYVKVNLYHAKKRISKKKTHVKKCTPNAVFNELFVFDIPCESLEEISVEFLVLDSERGSRNEVIGRLVLGATAEGSGGGHWKEICDFPRRQIAKWHMLCDG</sequence>
<dbReference type="EMBL" id="U14398">
    <property type="protein sequence ID" value="AAA68519.1"/>
    <property type="molecule type" value="mRNA"/>
</dbReference>
<dbReference type="EMBL" id="L38247">
    <property type="protein sequence ID" value="AAA67327.1"/>
    <property type="molecule type" value="mRNA"/>
</dbReference>
<dbReference type="PIR" id="I59355">
    <property type="entry name" value="I59355"/>
</dbReference>
<dbReference type="RefSeq" id="NP_113881.1">
    <property type="nucleotide sequence ID" value="NM_031693.2"/>
</dbReference>
<dbReference type="PDB" id="1W15">
    <property type="method" value="X-ray"/>
    <property type="resolution" value="1.93 A"/>
    <property type="chains" value="A=288-425"/>
</dbReference>
<dbReference type="PDB" id="1W16">
    <property type="method" value="X-ray"/>
    <property type="resolution" value="2.30 A"/>
    <property type="chains" value="A=288-425"/>
</dbReference>
<dbReference type="PDBsum" id="1W15"/>
<dbReference type="PDBsum" id="1W16"/>
<dbReference type="SMR" id="P50232"/>
<dbReference type="BioGRID" id="249064">
    <property type="interactions" value="1"/>
</dbReference>
<dbReference type="FunCoup" id="P50232">
    <property type="interactions" value="1625"/>
</dbReference>
<dbReference type="IntAct" id="P50232">
    <property type="interactions" value="5"/>
</dbReference>
<dbReference type="MINT" id="P50232"/>
<dbReference type="STRING" id="10116.ENSRNOP00000023593"/>
<dbReference type="iPTMnet" id="P50232"/>
<dbReference type="PhosphoSitePlus" id="P50232"/>
<dbReference type="PaxDb" id="10116-ENSRNOP00000023593"/>
<dbReference type="Ensembl" id="ENSRNOT00000023594.6">
    <property type="protein sequence ID" value="ENSRNOP00000023593.4"/>
    <property type="gene ID" value="ENSRNOG00000017333.6"/>
</dbReference>
<dbReference type="GeneID" id="64440"/>
<dbReference type="KEGG" id="rno:64440"/>
<dbReference type="UCSC" id="RGD:68397">
    <property type="organism name" value="rat"/>
</dbReference>
<dbReference type="AGR" id="RGD:68397"/>
<dbReference type="CTD" id="6860"/>
<dbReference type="RGD" id="68397">
    <property type="gene designation" value="Syt4"/>
</dbReference>
<dbReference type="eggNOG" id="KOG1028">
    <property type="taxonomic scope" value="Eukaryota"/>
</dbReference>
<dbReference type="GeneTree" id="ENSGT00940000159026"/>
<dbReference type="HOGENOM" id="CLU_023008_7_3_1"/>
<dbReference type="InParanoid" id="P50232"/>
<dbReference type="OMA" id="SIEYNFE"/>
<dbReference type="OrthoDB" id="270970at2759"/>
<dbReference type="PhylomeDB" id="P50232"/>
<dbReference type="TreeFam" id="TF315600"/>
<dbReference type="EvolutionaryTrace" id="P50232"/>
<dbReference type="PRO" id="PR:P50232"/>
<dbReference type="Proteomes" id="UP000002494">
    <property type="component" value="Chromosome 18"/>
</dbReference>
<dbReference type="Bgee" id="ENSRNOG00000017333">
    <property type="expression patterns" value="Expressed in cerebellum and 9 other cell types or tissues"/>
</dbReference>
<dbReference type="GO" id="GO:0097449">
    <property type="term" value="C:astrocyte projection"/>
    <property type="evidence" value="ECO:0000314"/>
    <property type="project" value="ParkinsonsUK-UCL"/>
</dbReference>
<dbReference type="GO" id="GO:0030424">
    <property type="term" value="C:axon"/>
    <property type="evidence" value="ECO:0000315"/>
    <property type="project" value="UniProtKB"/>
</dbReference>
<dbReference type="GO" id="GO:0030425">
    <property type="term" value="C:dendrite"/>
    <property type="evidence" value="ECO:0000266"/>
    <property type="project" value="RGD"/>
</dbReference>
<dbReference type="GO" id="GO:0031045">
    <property type="term" value="C:dense core granule"/>
    <property type="evidence" value="ECO:0000314"/>
    <property type="project" value="ParkinsonsUK-UCL"/>
</dbReference>
<dbReference type="GO" id="GO:0070382">
    <property type="term" value="C:exocytic vesicle"/>
    <property type="evidence" value="ECO:0000314"/>
    <property type="project" value="ParkinsonsUK-UCL"/>
</dbReference>
<dbReference type="GO" id="GO:0098978">
    <property type="term" value="C:glutamatergic synapse"/>
    <property type="evidence" value="ECO:0000266"/>
    <property type="project" value="RGD"/>
</dbReference>
<dbReference type="GO" id="GO:0005794">
    <property type="term" value="C:Golgi apparatus"/>
    <property type="evidence" value="ECO:0000314"/>
    <property type="project" value="ParkinsonsUK-UCL"/>
</dbReference>
<dbReference type="GO" id="GO:0016020">
    <property type="term" value="C:membrane"/>
    <property type="evidence" value="ECO:0000303"/>
    <property type="project" value="ParkinsonsUK-UCL"/>
</dbReference>
<dbReference type="GO" id="GO:1990742">
    <property type="term" value="C:microvesicle"/>
    <property type="evidence" value="ECO:0000266"/>
    <property type="project" value="RGD"/>
</dbReference>
<dbReference type="GO" id="GO:0043005">
    <property type="term" value="C:neuron projection"/>
    <property type="evidence" value="ECO:0000314"/>
    <property type="project" value="ParkinsonsUK-UCL"/>
</dbReference>
<dbReference type="GO" id="GO:0044306">
    <property type="term" value="C:neuron projection terminus"/>
    <property type="evidence" value="ECO:0000314"/>
    <property type="project" value="ParkinsonsUK-UCL"/>
</dbReference>
<dbReference type="GO" id="GO:0043025">
    <property type="term" value="C:neuronal cell body"/>
    <property type="evidence" value="ECO:0000314"/>
    <property type="project" value="ParkinsonsUK-UCL"/>
</dbReference>
<dbReference type="GO" id="GO:0098992">
    <property type="term" value="C:neuronal dense core vesicle"/>
    <property type="evidence" value="ECO:0000314"/>
    <property type="project" value="UniProtKB"/>
</dbReference>
<dbReference type="GO" id="GO:0099012">
    <property type="term" value="C:neuronal dense core vesicle membrane"/>
    <property type="evidence" value="ECO:0000314"/>
    <property type="project" value="UniProtKB"/>
</dbReference>
<dbReference type="GO" id="GO:0048471">
    <property type="term" value="C:perinuclear region of cytoplasm"/>
    <property type="evidence" value="ECO:0000266"/>
    <property type="project" value="RGD"/>
</dbReference>
<dbReference type="GO" id="GO:0005886">
    <property type="term" value="C:plasma membrane"/>
    <property type="evidence" value="ECO:0000266"/>
    <property type="project" value="RGD"/>
</dbReference>
<dbReference type="GO" id="GO:0030667">
    <property type="term" value="C:secretory granule membrane"/>
    <property type="evidence" value="ECO:0000314"/>
    <property type="project" value="ParkinsonsUK-UCL"/>
</dbReference>
<dbReference type="GO" id="GO:0036477">
    <property type="term" value="C:somatodendritic compartment"/>
    <property type="evidence" value="ECO:0000266"/>
    <property type="project" value="RGD"/>
</dbReference>
<dbReference type="GO" id="GO:0045202">
    <property type="term" value="C:synapse"/>
    <property type="evidence" value="ECO:0000318"/>
    <property type="project" value="GO_Central"/>
</dbReference>
<dbReference type="GO" id="GO:0008021">
    <property type="term" value="C:synaptic vesicle"/>
    <property type="evidence" value="ECO:0000314"/>
    <property type="project" value="ParkinsonsUK-UCL"/>
</dbReference>
<dbReference type="GO" id="GO:0031982">
    <property type="term" value="C:vesicle"/>
    <property type="evidence" value="ECO:0000266"/>
    <property type="project" value="RGD"/>
</dbReference>
<dbReference type="GO" id="GO:0005509">
    <property type="term" value="F:calcium ion binding"/>
    <property type="evidence" value="ECO:0000266"/>
    <property type="project" value="RGD"/>
</dbReference>
<dbReference type="GO" id="GO:0061891">
    <property type="term" value="F:calcium ion sensor activity"/>
    <property type="evidence" value="ECO:0000318"/>
    <property type="project" value="GO_Central"/>
</dbReference>
<dbReference type="GO" id="GO:0005544">
    <property type="term" value="F:calcium-dependent phospholipid binding"/>
    <property type="evidence" value="ECO:0000266"/>
    <property type="project" value="RGD"/>
</dbReference>
<dbReference type="GO" id="GO:0030276">
    <property type="term" value="F:clathrin binding"/>
    <property type="evidence" value="ECO:0000314"/>
    <property type="project" value="BHF-UCL"/>
</dbReference>
<dbReference type="GO" id="GO:0001786">
    <property type="term" value="F:phosphatidylserine binding"/>
    <property type="evidence" value="ECO:0000314"/>
    <property type="project" value="RGD"/>
</dbReference>
<dbReference type="GO" id="GO:0046982">
    <property type="term" value="F:protein heterodimerization activity"/>
    <property type="evidence" value="ECO:0000353"/>
    <property type="project" value="ParkinsonsUK-UCL"/>
</dbReference>
<dbReference type="GO" id="GO:0042803">
    <property type="term" value="F:protein homodimerization activity"/>
    <property type="evidence" value="ECO:0000353"/>
    <property type="project" value="ParkinsonsUK-UCL"/>
</dbReference>
<dbReference type="GO" id="GO:0000149">
    <property type="term" value="F:SNARE binding"/>
    <property type="evidence" value="ECO:0000314"/>
    <property type="project" value="RGD"/>
</dbReference>
<dbReference type="GO" id="GO:0019905">
    <property type="term" value="F:syntaxin binding"/>
    <property type="evidence" value="ECO:0000353"/>
    <property type="project" value="ParkinsonsUK-UCL"/>
</dbReference>
<dbReference type="GO" id="GO:0017075">
    <property type="term" value="F:syntaxin-1 binding"/>
    <property type="evidence" value="ECO:0000353"/>
    <property type="project" value="ParkinsonsUK-UCL"/>
</dbReference>
<dbReference type="GO" id="GO:0030348">
    <property type="term" value="F:syntaxin-3 binding"/>
    <property type="evidence" value="ECO:0000353"/>
    <property type="project" value="ParkinsonsUK-UCL"/>
</dbReference>
<dbReference type="GO" id="GO:0099502">
    <property type="term" value="P:calcium-dependent activation of synaptic vesicle fusion"/>
    <property type="evidence" value="ECO:0000318"/>
    <property type="project" value="GO_Central"/>
</dbReference>
<dbReference type="GO" id="GO:0017156">
    <property type="term" value="P:calcium-ion regulated exocytosis"/>
    <property type="evidence" value="ECO:0000303"/>
    <property type="project" value="RGD"/>
</dbReference>
<dbReference type="GO" id="GO:0030154">
    <property type="term" value="P:cell differentiation"/>
    <property type="evidence" value="ECO:0007669"/>
    <property type="project" value="UniProtKB-KW"/>
</dbReference>
<dbReference type="GO" id="GO:0099519">
    <property type="term" value="P:dense core granule cytoskeletal transport"/>
    <property type="evidence" value="ECO:0000315"/>
    <property type="project" value="UniProtKB"/>
</dbReference>
<dbReference type="GO" id="GO:0007613">
    <property type="term" value="P:memory"/>
    <property type="evidence" value="ECO:0000266"/>
    <property type="project" value="RGD"/>
</dbReference>
<dbReference type="GO" id="GO:0045955">
    <property type="term" value="P:negative regulation of calcium ion-dependent exocytosis"/>
    <property type="evidence" value="ECO:0000314"/>
    <property type="project" value="RGD"/>
</dbReference>
<dbReference type="GO" id="GO:0033604">
    <property type="term" value="P:negative regulation of catecholamine secretion"/>
    <property type="evidence" value="ECO:0000316"/>
    <property type="project" value="ParkinsonsUK-UCL"/>
</dbReference>
<dbReference type="GO" id="GO:1905414">
    <property type="term" value="P:negative regulation of dense core granule exocytosis"/>
    <property type="evidence" value="ECO:0000315"/>
    <property type="project" value="ParkinsonsUK-UCL"/>
</dbReference>
<dbReference type="GO" id="GO:0046929">
    <property type="term" value="P:negative regulation of neurotransmitter secretion"/>
    <property type="evidence" value="ECO:0000314"/>
    <property type="project" value="ParkinsonsUK-UCL"/>
</dbReference>
<dbReference type="GO" id="GO:0050709">
    <property type="term" value="P:negative regulation of protein secretion"/>
    <property type="evidence" value="ECO:0000266"/>
    <property type="project" value="RGD"/>
</dbReference>
<dbReference type="GO" id="GO:1905433">
    <property type="term" value="P:negative regulation of retrograde trans-synaptic signaling by neuropeptide"/>
    <property type="evidence" value="ECO:0000266"/>
    <property type="project" value="RGD"/>
</dbReference>
<dbReference type="GO" id="GO:0048174">
    <property type="term" value="P:negative regulation of short-term neuronal synaptic plasticity"/>
    <property type="evidence" value="ECO:0000266"/>
    <property type="project" value="RGD"/>
</dbReference>
<dbReference type="GO" id="GO:2000301">
    <property type="term" value="P:negative regulation of synaptic vesicle exocytosis"/>
    <property type="evidence" value="ECO:0000266"/>
    <property type="project" value="RGD"/>
</dbReference>
<dbReference type="GO" id="GO:0031339">
    <property type="term" value="P:negative regulation of vesicle fusion"/>
    <property type="evidence" value="ECO:0000314"/>
    <property type="project" value="ParkinsonsUK-UCL"/>
</dbReference>
<dbReference type="GO" id="GO:0007269">
    <property type="term" value="P:neurotransmitter secretion"/>
    <property type="evidence" value="ECO:0000266"/>
    <property type="project" value="RGD"/>
</dbReference>
<dbReference type="GO" id="GO:1903861">
    <property type="term" value="P:positive regulation of dendrite extension"/>
    <property type="evidence" value="ECO:0000266"/>
    <property type="project" value="RGD"/>
</dbReference>
<dbReference type="GO" id="GO:1905415">
    <property type="term" value="P:positive regulation of dense core granule exocytosis"/>
    <property type="evidence" value="ECO:0000266"/>
    <property type="project" value="RGD"/>
</dbReference>
<dbReference type="GO" id="GO:0014049">
    <property type="term" value="P:positive regulation of glutamate secretion"/>
    <property type="evidence" value="ECO:0000266"/>
    <property type="project" value="RGD"/>
</dbReference>
<dbReference type="GO" id="GO:0017158">
    <property type="term" value="P:regulation of calcium ion-dependent exocytosis"/>
    <property type="evidence" value="ECO:0000266"/>
    <property type="project" value="RGD"/>
</dbReference>
<dbReference type="GO" id="GO:0014059">
    <property type="term" value="P:regulation of dopamine secretion"/>
    <property type="evidence" value="ECO:0000266"/>
    <property type="project" value="RGD"/>
</dbReference>
<dbReference type="GO" id="GO:0030100">
    <property type="term" value="P:regulation of endocytosis"/>
    <property type="evidence" value="ECO:0000315"/>
    <property type="project" value="ParkinsonsUK-UCL"/>
</dbReference>
<dbReference type="GO" id="GO:0150044">
    <property type="term" value="P:regulation of postsynaptic dense core vesicle exocytosis"/>
    <property type="evidence" value="ECO:0000266"/>
    <property type="project" value="RGD"/>
</dbReference>
<dbReference type="GO" id="GO:0150035">
    <property type="term" value="P:regulation of trans-synaptic signaling by BDNF, modulating synaptic transmission"/>
    <property type="evidence" value="ECO:0000266"/>
    <property type="project" value="RGD"/>
</dbReference>
<dbReference type="GO" id="GO:0031338">
    <property type="term" value="P:regulation of vesicle fusion"/>
    <property type="evidence" value="ECO:0000315"/>
    <property type="project" value="ParkinsonsUK-UCL"/>
</dbReference>
<dbReference type="GO" id="GO:0061792">
    <property type="term" value="P:secretory granule maturation"/>
    <property type="evidence" value="ECO:0000315"/>
    <property type="project" value="ParkinsonsUK-UCL"/>
</dbReference>
<dbReference type="GO" id="GO:0006906">
    <property type="term" value="P:vesicle fusion"/>
    <property type="evidence" value="ECO:0000318"/>
    <property type="project" value="GO_Central"/>
</dbReference>
<dbReference type="GO" id="GO:0061782">
    <property type="term" value="P:vesicle fusion with vesicle"/>
    <property type="evidence" value="ECO:0000315"/>
    <property type="project" value="ParkinsonsUK-UCL"/>
</dbReference>
<dbReference type="GO" id="GO:0016192">
    <property type="term" value="P:vesicle-mediated transport"/>
    <property type="evidence" value="ECO:0000318"/>
    <property type="project" value="GO_Central"/>
</dbReference>
<dbReference type="CDD" id="cd08388">
    <property type="entry name" value="C2A_Synaptotagmin-4-11"/>
    <property type="match status" value="1"/>
</dbReference>
<dbReference type="CDD" id="cd08404">
    <property type="entry name" value="C2B_Synaptotagmin-4"/>
    <property type="match status" value="1"/>
</dbReference>
<dbReference type="FunFam" id="2.60.40.150:FF:000039">
    <property type="entry name" value="Synaptotagmin 11"/>
    <property type="match status" value="1"/>
</dbReference>
<dbReference type="FunFam" id="2.60.40.150:FF:000051">
    <property type="entry name" value="Synaptotagmin 11"/>
    <property type="match status" value="1"/>
</dbReference>
<dbReference type="Gene3D" id="2.60.40.150">
    <property type="entry name" value="C2 domain"/>
    <property type="match status" value="2"/>
</dbReference>
<dbReference type="InterPro" id="IPR000008">
    <property type="entry name" value="C2_dom"/>
</dbReference>
<dbReference type="InterPro" id="IPR035892">
    <property type="entry name" value="C2_domain_sf"/>
</dbReference>
<dbReference type="InterPro" id="IPR001565">
    <property type="entry name" value="Synaptotagmin"/>
</dbReference>
<dbReference type="PANTHER" id="PTHR10024">
    <property type="entry name" value="SYNAPTOTAGMIN"/>
    <property type="match status" value="1"/>
</dbReference>
<dbReference type="PANTHER" id="PTHR10024:SF114">
    <property type="entry name" value="SYNAPTOTAGMIN-4"/>
    <property type="match status" value="1"/>
</dbReference>
<dbReference type="Pfam" id="PF00168">
    <property type="entry name" value="C2"/>
    <property type="match status" value="2"/>
</dbReference>
<dbReference type="PRINTS" id="PR00399">
    <property type="entry name" value="SYNAPTOTAGMN"/>
</dbReference>
<dbReference type="SMART" id="SM00239">
    <property type="entry name" value="C2"/>
    <property type="match status" value="2"/>
</dbReference>
<dbReference type="SUPFAM" id="SSF49562">
    <property type="entry name" value="C2 domain (Calcium/lipid-binding domain, CaLB)"/>
    <property type="match status" value="2"/>
</dbReference>
<dbReference type="PROSITE" id="PS50004">
    <property type="entry name" value="C2"/>
    <property type="match status" value="2"/>
</dbReference>
<comment type="function">
    <text evidence="1 5 8">Synaptotagmin family member which does not bind Ca(2+) (PubMed:7993622). Involved in neuronal dense core vesicles (DCVs) mobility through its interaction with KIF1A. Upon increased neuronal activity, phosphorylation by MAPK8/JNK1 destabilizes the interaction with KIF1A and captures DCVs to synapses (PubMed:29166604). Plays a role in dendrite formation by melanocytes (By similarity).</text>
</comment>
<comment type="cofactor">
    <cofactor evidence="3">
        <name>Ca(2+)</name>
        <dbReference type="ChEBI" id="CHEBI:29108"/>
    </cofactor>
</comment>
<comment type="subunit">
    <text evidence="5 6">Interacts with KIF1A; the interaction increases in presence of calcium and decreases when SYT4 is phosphorylated at Ser-135.</text>
</comment>
<comment type="interaction">
    <interactant intactId="EBI-540118">
        <id>P50232</id>
    </interactant>
    <interactant intactId="EBI-7155513">
        <id>P49187</id>
        <label>Mapk10</label>
    </interactant>
    <organismsDiffer>false</organismsDiffer>
    <experiments>2</experiments>
</comment>
<comment type="interaction">
    <interactant intactId="EBI-540118">
        <id>P50232</id>
    </interactant>
    <interactant intactId="EBI-7456505">
        <id>P49185</id>
        <label>Mapk8</label>
    </interactant>
    <organismsDiffer>false</organismsDiffer>
    <experiments>5</experiments>
</comment>
<comment type="interaction">
    <interactant intactId="EBI-540118">
        <id>P50232</id>
    </interactant>
    <interactant intactId="EBI-458098">
        <id>P21707</id>
        <label>Syt1</label>
    </interactant>
    <organismsDiffer>false</organismsDiffer>
    <experiments>3</experiments>
</comment>
<comment type="subcellular location">
    <subcellularLocation>
        <location evidence="5 11">Cytoplasmic vesicle</location>
        <location evidence="5 11">Secretory vesicle</location>
        <location evidence="5 11">Neuronal dense core vesicle membrane</location>
        <topology evidence="10">Single-pass membrane protein</topology>
    </subcellularLocation>
</comment>
<comment type="tissue specificity">
    <text evidence="7 8">Widely expressed (PubMed:7892240). Expressed in the brain (PubMed:7892240). Expressed in pituitary gland, cerebellum, cortex, hypothalamus and hippocampus (PubMed:7892240).</text>
</comment>
<comment type="induction">
    <text evidence="7">Up-regulated by potassium depolarization, calcium ionophore, ATP and forskolin in culture cells (PubMed:7892240). Up-regulated by kainate in the hippocampus and piriform cortex (PubMed:7892240).</text>
</comment>
<comment type="domain">
    <text evidence="8 9">Unlike in other synaptotagmin family members, the first C2 domain/C2A does not bind Ca(2+) neither mediates Ca(2+)-dependent phospholipid binding. An aspartate-to-serine substitution in this domain inactivates Ca(2+)/phospho-lipid binding.</text>
</comment>
<comment type="PTM">
    <text evidence="5">Phosphorylation at Ser-135 by MAPK8/JNK1 reduces interaction with KIF1A and neuronal dense core vesicles mobility.</text>
</comment>
<comment type="similarity">
    <text evidence="10">Belongs to the synaptotagmin family.</text>
</comment>
<reference key="1">
    <citation type="journal article" date="1994" name="Neuron">
        <title>Functional properties of multiple synaptotagmins in brain.</title>
        <authorList>
            <person name="Ullrich B."/>
            <person name="Li C."/>
            <person name="Zhang J.Z."/>
            <person name="McMahon H."/>
            <person name="Anderson R.G."/>
            <person name="Geppert M."/>
            <person name="Suedhof T.C."/>
        </authorList>
    </citation>
    <scope>NUCLEOTIDE SEQUENCE [MRNA]</scope>
    <scope>FUNCTION</scope>
    <scope>TISSUE SPECIFICITY</scope>
    <source>
        <tissue>Brain</tissue>
    </source>
</reference>
<reference key="2">
    <citation type="journal article" date="1995" name="Proc. Natl. Acad. Sci. U.S.A.">
        <title>Synaptotagmin IV is an immediate early gene induced by depolarization in PC12 cells and in brain.</title>
        <authorList>
            <person name="Vician L."/>
            <person name="Lim I.K."/>
            <person name="Ferguson G."/>
            <person name="Tocco G."/>
            <person name="Baudry M."/>
            <person name="Herschman H.R."/>
        </authorList>
    </citation>
    <scope>NUCLEOTIDE SEQUENCE [MRNA]</scope>
    <scope>INDUCTION</scope>
    <scope>TISSUE SPECIFICITY</scope>
</reference>
<reference key="3">
    <citation type="journal article" date="1997" name="J. Biol. Chem.">
        <title>The evolutionary pressure to inactivate. A subclass of synaptotagmins with an amino acid substitution that abolishes Ca2+ binding.</title>
        <authorList>
            <person name="von Poser C."/>
            <person name="Ichtchenko K."/>
            <person name="Shao X."/>
            <person name="Rizo J."/>
            <person name="Suedhof T.C."/>
        </authorList>
    </citation>
    <scope>FUNCTION</scope>
    <scope>DOMAIN</scope>
    <scope>MUTAGENESIS OF SER-244</scope>
</reference>
<reference key="4">
    <citation type="journal article" date="2012" name="Nat. Commun.">
        <title>Quantitative maps of protein phosphorylation sites across 14 different rat organs and tissues.</title>
        <authorList>
            <person name="Lundby A."/>
            <person name="Secher A."/>
            <person name="Lage K."/>
            <person name="Nordsborg N.B."/>
            <person name="Dmytriyev A."/>
            <person name="Lundby C."/>
            <person name="Olsen J.V."/>
        </authorList>
    </citation>
    <scope>PHOSPHORYLATION [LARGE SCALE ANALYSIS] AT SER-135</scope>
    <scope>IDENTIFICATION BY MASS SPECTROMETRY [LARGE SCALE ANALYSIS]</scope>
</reference>
<reference key="5">
    <citation type="journal article" date="2017" name="Cell Rep.">
        <title>Capture of Dense Core Vesicles at Synapses by JNK-Dependent Phosphorylation of Synaptotagmin-4.</title>
        <authorList>
            <person name="Bharat V."/>
            <person name="Siebrecht M."/>
            <person name="Burk K."/>
            <person name="Ahmed S."/>
            <person name="Reissner C."/>
            <person name="Kohansal-Nodehi M."/>
            <person name="Steubler V."/>
            <person name="Zweckstetter M."/>
            <person name="Ting J.T."/>
            <person name="Dean C."/>
        </authorList>
    </citation>
    <scope>FUNCTION</scope>
    <scope>SUBCELLULAR LOCATION</scope>
    <scope>MUTAGENESIS OF SER-135</scope>
    <scope>PHOSPHORYLATION AT SER-135</scope>
    <scope>INTERACTION WITH KIF1A</scope>
</reference>
<reference key="6">
    <citation type="journal article" date="2018" name="Cell Rep.">
        <title>Regulation of KIF1A-Driven Dense Core Vesicle Transport: Ca2+/CaM Controls DCV Binding and Liprin-alpha/TANC2 Recruits DCVs to Postsynaptic Sites.</title>
        <authorList>
            <person name="Stucchi R."/>
            <person name="Plucinska G."/>
            <person name="Hummel J.J.A."/>
            <person name="Zahavi E.E."/>
            <person name="Guerra San Juan I."/>
            <person name="Klykov O."/>
            <person name="Scheltema R.A."/>
            <person name="Altelaar A.F.M."/>
            <person name="Hoogenraad C.C."/>
        </authorList>
    </citation>
    <scope>INTERACTION WITH KIF1A</scope>
    <scope>SUBCELLULAR LOCATION</scope>
</reference>
<evidence type="ECO:0000250" key="1">
    <source>
        <dbReference type="UniProtKB" id="Q9H2B2"/>
    </source>
</evidence>
<evidence type="ECO:0000255" key="2"/>
<evidence type="ECO:0000255" key="3">
    <source>
        <dbReference type="PROSITE-ProRule" id="PRU00041"/>
    </source>
</evidence>
<evidence type="ECO:0000256" key="4">
    <source>
        <dbReference type="SAM" id="MobiDB-lite"/>
    </source>
</evidence>
<evidence type="ECO:0000269" key="5">
    <source>
    </source>
</evidence>
<evidence type="ECO:0000269" key="6">
    <source>
    </source>
</evidence>
<evidence type="ECO:0000269" key="7">
    <source>
    </source>
</evidence>
<evidence type="ECO:0000269" key="8">
    <source>
    </source>
</evidence>
<evidence type="ECO:0000269" key="9">
    <source>
    </source>
</evidence>
<evidence type="ECO:0000305" key="10"/>
<evidence type="ECO:0000305" key="11">
    <source>
    </source>
</evidence>
<evidence type="ECO:0007744" key="12">
    <source>
    </source>
</evidence>
<evidence type="ECO:0007829" key="13">
    <source>
        <dbReference type="PDB" id="1W15"/>
    </source>
</evidence>
<accession>P50232</accession>
<protein>
    <recommendedName>
        <fullName>Synaptotagmin-4</fullName>
    </recommendedName>
    <alternativeName>
        <fullName>Synaptotagmin IV</fullName>
        <shortName>SytIV</shortName>
    </alternativeName>
</protein>
<organism>
    <name type="scientific">Rattus norvegicus</name>
    <name type="common">Rat</name>
    <dbReference type="NCBI Taxonomy" id="10116"/>
    <lineage>
        <taxon>Eukaryota</taxon>
        <taxon>Metazoa</taxon>
        <taxon>Chordata</taxon>
        <taxon>Craniata</taxon>
        <taxon>Vertebrata</taxon>
        <taxon>Euteleostomi</taxon>
        <taxon>Mammalia</taxon>
        <taxon>Eutheria</taxon>
        <taxon>Euarchontoglires</taxon>
        <taxon>Glires</taxon>
        <taxon>Rodentia</taxon>
        <taxon>Myomorpha</taxon>
        <taxon>Muroidea</taxon>
        <taxon>Muridae</taxon>
        <taxon>Murinae</taxon>
        <taxon>Rattus</taxon>
    </lineage>
</organism>
<proteinExistence type="evidence at protein level"/>